<accession>P16813</accession>
<feature type="chain" id="PRO_0000115321" description="Uncharacterized protein UL39">
    <location>
        <begin position="1"/>
        <end position="124"/>
    </location>
</feature>
<feature type="region of interest" description="Disordered" evidence="1">
    <location>
        <begin position="82"/>
        <end position="124"/>
    </location>
</feature>
<gene>
    <name type="primary">UL39</name>
</gene>
<organism>
    <name type="scientific">Human cytomegalovirus (strain AD169)</name>
    <name type="common">HHV-5</name>
    <name type="synonym">Human herpesvirus 5</name>
    <dbReference type="NCBI Taxonomy" id="10360"/>
    <lineage>
        <taxon>Viruses</taxon>
        <taxon>Duplodnaviria</taxon>
        <taxon>Heunggongvirae</taxon>
        <taxon>Peploviricota</taxon>
        <taxon>Herviviricetes</taxon>
        <taxon>Herpesvirales</taxon>
        <taxon>Orthoherpesviridae</taxon>
        <taxon>Betaherpesvirinae</taxon>
        <taxon>Cytomegalovirus</taxon>
        <taxon>Cytomegalovirus humanbeta5</taxon>
        <taxon>Human cytomegalovirus</taxon>
    </lineage>
</organism>
<name>UL39_HCMVA</name>
<evidence type="ECO:0000256" key="1">
    <source>
        <dbReference type="SAM" id="MobiDB-lite"/>
    </source>
</evidence>
<dbReference type="EMBL" id="X17403">
    <property type="protein sequence ID" value="CAA35398.1"/>
    <property type="molecule type" value="Genomic_DNA"/>
</dbReference>
<dbReference type="PIR" id="S09802">
    <property type="entry name" value="S09802"/>
</dbReference>
<dbReference type="Proteomes" id="UP000008991">
    <property type="component" value="Segment"/>
</dbReference>
<protein>
    <recommendedName>
        <fullName>Uncharacterized protein UL39</fullName>
    </recommendedName>
</protein>
<sequence length="124" mass="13532">GISTFFLSVTLFTVNRTCDLLTPPPWYPITVKNTHHTSRHRSIFFILSVMIGKGTREDVQLSLSSLFQGVVMIVGQNPQAPSDLGIEGGERAQGQNAHSVHGPGLQTERGGSQLQMVGHPLREL</sequence>
<reference key="1">
    <citation type="journal article" date="1990" name="Curr. Top. Microbiol. Immunol.">
        <title>Analysis of the protein-coding content of the sequence of human cytomegalovirus strain AD169.</title>
        <authorList>
            <person name="Chee M.S."/>
            <person name="Bankier A.T."/>
            <person name="Beck S."/>
            <person name="Bohni R."/>
            <person name="Brown C.M."/>
            <person name="Cerny R."/>
            <person name="Horsnell T."/>
            <person name="Hutchison C.A. III"/>
            <person name="Kouzarides T."/>
            <person name="Martignetti J.A."/>
            <person name="Preddie E."/>
            <person name="Satchwell S.C."/>
            <person name="Tomlinson P."/>
            <person name="Weston K.M."/>
            <person name="Barrell B.G."/>
        </authorList>
    </citation>
    <scope>NUCLEOTIDE SEQUENCE [LARGE SCALE GENOMIC DNA]</scope>
</reference>
<organismHost>
    <name type="scientific">Homo sapiens</name>
    <name type="common">Human</name>
    <dbReference type="NCBI Taxonomy" id="9606"/>
</organismHost>
<proteinExistence type="predicted"/>